<dbReference type="EC" id="3.5.1.5" evidence="1"/>
<dbReference type="EMBL" id="CP000474">
    <property type="protein sequence ID" value="ABM07828.1"/>
    <property type="molecule type" value="Genomic_DNA"/>
</dbReference>
<dbReference type="RefSeq" id="WP_011772985.1">
    <property type="nucleotide sequence ID" value="NC_008711.1"/>
</dbReference>
<dbReference type="SMR" id="A1R1C5"/>
<dbReference type="STRING" id="290340.AAur_0216"/>
<dbReference type="MEROPS" id="M38.982"/>
<dbReference type="KEGG" id="aau:AAur_0216"/>
<dbReference type="eggNOG" id="COG0804">
    <property type="taxonomic scope" value="Bacteria"/>
</dbReference>
<dbReference type="HOGENOM" id="CLU_000980_0_0_11"/>
<dbReference type="OrthoDB" id="9802793at2"/>
<dbReference type="UniPathway" id="UPA00258">
    <property type="reaction ID" value="UER00370"/>
</dbReference>
<dbReference type="Proteomes" id="UP000000637">
    <property type="component" value="Chromosome"/>
</dbReference>
<dbReference type="GO" id="GO:0005737">
    <property type="term" value="C:cytoplasm"/>
    <property type="evidence" value="ECO:0007669"/>
    <property type="project" value="UniProtKB-SubCell"/>
</dbReference>
<dbReference type="GO" id="GO:0016151">
    <property type="term" value="F:nickel cation binding"/>
    <property type="evidence" value="ECO:0007669"/>
    <property type="project" value="UniProtKB-UniRule"/>
</dbReference>
<dbReference type="GO" id="GO:0009039">
    <property type="term" value="F:urease activity"/>
    <property type="evidence" value="ECO:0007669"/>
    <property type="project" value="UniProtKB-UniRule"/>
</dbReference>
<dbReference type="GO" id="GO:0043419">
    <property type="term" value="P:urea catabolic process"/>
    <property type="evidence" value="ECO:0007669"/>
    <property type="project" value="UniProtKB-UniRule"/>
</dbReference>
<dbReference type="CDD" id="cd00375">
    <property type="entry name" value="Urease_alpha"/>
    <property type="match status" value="1"/>
</dbReference>
<dbReference type="Gene3D" id="3.20.20.140">
    <property type="entry name" value="Metal-dependent hydrolases"/>
    <property type="match status" value="1"/>
</dbReference>
<dbReference type="Gene3D" id="2.30.40.10">
    <property type="entry name" value="Urease, subunit C, domain 1"/>
    <property type="match status" value="1"/>
</dbReference>
<dbReference type="HAMAP" id="MF_01953">
    <property type="entry name" value="Urease_alpha"/>
    <property type="match status" value="1"/>
</dbReference>
<dbReference type="InterPro" id="IPR006680">
    <property type="entry name" value="Amidohydro-rel"/>
</dbReference>
<dbReference type="InterPro" id="IPR011059">
    <property type="entry name" value="Metal-dep_hydrolase_composite"/>
</dbReference>
<dbReference type="InterPro" id="IPR032466">
    <property type="entry name" value="Metal_Hydrolase"/>
</dbReference>
<dbReference type="InterPro" id="IPR011612">
    <property type="entry name" value="Urease_alpha_N_dom"/>
</dbReference>
<dbReference type="InterPro" id="IPR050112">
    <property type="entry name" value="Urease_alpha_subunit"/>
</dbReference>
<dbReference type="InterPro" id="IPR017950">
    <property type="entry name" value="Urease_AS"/>
</dbReference>
<dbReference type="InterPro" id="IPR005848">
    <property type="entry name" value="Urease_asu"/>
</dbReference>
<dbReference type="InterPro" id="IPR017951">
    <property type="entry name" value="Urease_asu_c"/>
</dbReference>
<dbReference type="InterPro" id="IPR029754">
    <property type="entry name" value="Urease_Ni-bd"/>
</dbReference>
<dbReference type="NCBIfam" id="NF009686">
    <property type="entry name" value="PRK13207.1"/>
    <property type="match status" value="1"/>
</dbReference>
<dbReference type="NCBIfam" id="TIGR01792">
    <property type="entry name" value="urease_alph"/>
    <property type="match status" value="1"/>
</dbReference>
<dbReference type="PANTHER" id="PTHR43440">
    <property type="entry name" value="UREASE"/>
    <property type="match status" value="1"/>
</dbReference>
<dbReference type="PANTHER" id="PTHR43440:SF1">
    <property type="entry name" value="UREASE"/>
    <property type="match status" value="1"/>
</dbReference>
<dbReference type="Pfam" id="PF01979">
    <property type="entry name" value="Amidohydro_1"/>
    <property type="match status" value="1"/>
</dbReference>
<dbReference type="Pfam" id="PF00449">
    <property type="entry name" value="Urease_alpha"/>
    <property type="match status" value="1"/>
</dbReference>
<dbReference type="PRINTS" id="PR01752">
    <property type="entry name" value="UREASE"/>
</dbReference>
<dbReference type="SUPFAM" id="SSF51338">
    <property type="entry name" value="Composite domain of metallo-dependent hydrolases"/>
    <property type="match status" value="2"/>
</dbReference>
<dbReference type="SUPFAM" id="SSF51556">
    <property type="entry name" value="Metallo-dependent hydrolases"/>
    <property type="match status" value="1"/>
</dbReference>
<dbReference type="PROSITE" id="PS01120">
    <property type="entry name" value="UREASE_1"/>
    <property type="match status" value="1"/>
</dbReference>
<dbReference type="PROSITE" id="PS00145">
    <property type="entry name" value="UREASE_2"/>
    <property type="match status" value="1"/>
</dbReference>
<dbReference type="PROSITE" id="PS51368">
    <property type="entry name" value="UREASE_3"/>
    <property type="match status" value="1"/>
</dbReference>
<accession>A1R1C5</accession>
<name>URE1_PAEAT</name>
<comment type="catalytic activity">
    <reaction evidence="1">
        <text>urea + 2 H2O + H(+) = hydrogencarbonate + 2 NH4(+)</text>
        <dbReference type="Rhea" id="RHEA:20557"/>
        <dbReference type="ChEBI" id="CHEBI:15377"/>
        <dbReference type="ChEBI" id="CHEBI:15378"/>
        <dbReference type="ChEBI" id="CHEBI:16199"/>
        <dbReference type="ChEBI" id="CHEBI:17544"/>
        <dbReference type="ChEBI" id="CHEBI:28938"/>
        <dbReference type="EC" id="3.5.1.5"/>
    </reaction>
</comment>
<comment type="cofactor">
    <cofactor evidence="1">
        <name>Ni cation</name>
        <dbReference type="ChEBI" id="CHEBI:25516"/>
    </cofactor>
    <text evidence="1">Binds 2 nickel ions per subunit.</text>
</comment>
<comment type="pathway">
    <text evidence="1">Nitrogen metabolism; urea degradation; CO(2) and NH(3) from urea (urease route): step 1/1.</text>
</comment>
<comment type="subunit">
    <text evidence="1">Heterotrimer of UreA (gamma), UreB (beta) and UreC (alpha) subunits. Three heterotrimers associate to form the active enzyme.</text>
</comment>
<comment type="subcellular location">
    <subcellularLocation>
        <location evidence="1">Cytoplasm</location>
    </subcellularLocation>
</comment>
<comment type="PTM">
    <text evidence="1">Carboxylation allows a single lysine to coordinate two nickel ions.</text>
</comment>
<comment type="similarity">
    <text evidence="1">Belongs to the metallo-dependent hydrolases superfamily. Urease alpha subunit family.</text>
</comment>
<protein>
    <recommendedName>
        <fullName evidence="1">Urease subunit alpha</fullName>
        <ecNumber evidence="1">3.5.1.5</ecNumber>
    </recommendedName>
    <alternativeName>
        <fullName evidence="1">Urea amidohydrolase subunit alpha</fullName>
    </alternativeName>
</protein>
<evidence type="ECO:0000255" key="1">
    <source>
        <dbReference type="HAMAP-Rule" id="MF_01953"/>
    </source>
</evidence>
<gene>
    <name evidence="1" type="primary">ureC</name>
    <name type="ordered locus">AAur_0216</name>
</gene>
<reference key="1">
    <citation type="journal article" date="2006" name="PLoS Genet.">
        <title>Secrets of soil survival revealed by the genome sequence of Arthrobacter aurescens TC1.</title>
        <authorList>
            <person name="Mongodin E.F."/>
            <person name="Shapir N."/>
            <person name="Daugherty S.C."/>
            <person name="DeBoy R.T."/>
            <person name="Emerson J.B."/>
            <person name="Shvartzbeyn A."/>
            <person name="Radune D."/>
            <person name="Vamathevan J."/>
            <person name="Riggs F."/>
            <person name="Grinberg V."/>
            <person name="Khouri H.M."/>
            <person name="Wackett L.P."/>
            <person name="Nelson K.E."/>
            <person name="Sadowsky M.J."/>
        </authorList>
    </citation>
    <scope>NUCLEOTIDE SEQUENCE [LARGE SCALE GENOMIC DNA]</scope>
    <source>
        <strain>TC1</strain>
    </source>
</reference>
<feature type="chain" id="PRO_1000070646" description="Urease subunit alpha">
    <location>
        <begin position="1"/>
        <end position="576"/>
    </location>
</feature>
<feature type="domain" description="Urease" evidence="1">
    <location>
        <begin position="132"/>
        <end position="576"/>
    </location>
</feature>
<feature type="active site" description="Proton donor" evidence="1">
    <location>
        <position position="323"/>
    </location>
</feature>
<feature type="binding site" evidence="1">
    <location>
        <position position="137"/>
    </location>
    <ligand>
        <name>Ni(2+)</name>
        <dbReference type="ChEBI" id="CHEBI:49786"/>
        <label>1</label>
    </ligand>
</feature>
<feature type="binding site" evidence="1">
    <location>
        <position position="139"/>
    </location>
    <ligand>
        <name>Ni(2+)</name>
        <dbReference type="ChEBI" id="CHEBI:49786"/>
        <label>1</label>
    </ligand>
</feature>
<feature type="binding site" description="via carbamate group" evidence="1">
    <location>
        <position position="220"/>
    </location>
    <ligand>
        <name>Ni(2+)</name>
        <dbReference type="ChEBI" id="CHEBI:49786"/>
        <label>1</label>
    </ligand>
</feature>
<feature type="binding site" description="via carbamate group" evidence="1">
    <location>
        <position position="220"/>
    </location>
    <ligand>
        <name>Ni(2+)</name>
        <dbReference type="ChEBI" id="CHEBI:49786"/>
        <label>2</label>
    </ligand>
</feature>
<feature type="binding site" evidence="1">
    <location>
        <position position="222"/>
    </location>
    <ligand>
        <name>substrate</name>
    </ligand>
</feature>
<feature type="binding site" evidence="1">
    <location>
        <position position="249"/>
    </location>
    <ligand>
        <name>Ni(2+)</name>
        <dbReference type="ChEBI" id="CHEBI:49786"/>
        <label>2</label>
    </ligand>
</feature>
<feature type="binding site" evidence="1">
    <location>
        <position position="275"/>
    </location>
    <ligand>
        <name>Ni(2+)</name>
        <dbReference type="ChEBI" id="CHEBI:49786"/>
        <label>2</label>
    </ligand>
</feature>
<feature type="binding site" evidence="1">
    <location>
        <position position="363"/>
    </location>
    <ligand>
        <name>Ni(2+)</name>
        <dbReference type="ChEBI" id="CHEBI:49786"/>
        <label>1</label>
    </ligand>
</feature>
<feature type="modified residue" description="N6-carboxylysine" evidence="1">
    <location>
        <position position="220"/>
    </location>
</feature>
<proteinExistence type="inferred from homology"/>
<organism>
    <name type="scientific">Paenarthrobacter aurescens (strain TC1)</name>
    <dbReference type="NCBI Taxonomy" id="290340"/>
    <lineage>
        <taxon>Bacteria</taxon>
        <taxon>Bacillati</taxon>
        <taxon>Actinomycetota</taxon>
        <taxon>Actinomycetes</taxon>
        <taxon>Micrococcales</taxon>
        <taxon>Micrococcaceae</taxon>
        <taxon>Paenarthrobacter</taxon>
    </lineage>
</organism>
<keyword id="KW-0963">Cytoplasm</keyword>
<keyword id="KW-0378">Hydrolase</keyword>
<keyword id="KW-0479">Metal-binding</keyword>
<keyword id="KW-0533">Nickel</keyword>
<sequence>MSFEIPRKQYAQLYGPTTGDSIRLADTELFLEIEKDYTVYGEEVVFGGGKVIRDGMGQNGQLTRAEDIPDTVITNVIVLDYTGIYKADIALKDGHIFKIGKAGNPQITDGVDIVIGASTEIIAGERKILTAGGIDTHIHFISPEQVPAALCNGITTMVGGGTGPAEGTKATTITPGAWHISRMLQAAEGLPVNIGLFGKGHASAVEPLAEQIRAGAVGLKVHEDWGSTTSSIDMSLRVADEYDVQIAIHTDTLNECGFVEDTIRAIDGRVIHTFHTEGAGGGHAPDIIKIAGLPNVLPASTNPTLPYTRNTIEEHLDMLMVCHHLNPDIPEDVAFADSRIRAETIAAEDVLHDLGIFAITSSDSQAMGRVGEVVTRTWQVADAMKRQRGALHDPSGAPHGSAESDNFRLKRYIAKYTINAAIAQGMADVIGSVEEGKFADLVLWDPAFFGVKPELVIKGGQIAYALMGDANASIPTPQPRTMRPMFATYGKALQQTSITFLSQAAIDAGVPAELGLQRIIKPVSGIRNLTKADLKYNGETPDIAVDPETYKVTVDGVEVTSQPSDVLPMAQRYFLF</sequence>